<protein>
    <recommendedName>
        <fullName evidence="1">NADH-quinone oxidoreductase subunit B</fullName>
        <ecNumber evidence="1">7.1.1.-</ecNumber>
    </recommendedName>
    <alternativeName>
        <fullName evidence="1">NADH dehydrogenase I subunit B</fullName>
    </alternativeName>
    <alternativeName>
        <fullName evidence="1">NDH-1 subunit B</fullName>
    </alternativeName>
</protein>
<feature type="chain" id="PRO_0000376298" description="NADH-quinone oxidoreductase subunit B">
    <location>
        <begin position="1"/>
        <end position="191"/>
    </location>
</feature>
<feature type="binding site" evidence="1">
    <location>
        <position position="70"/>
    </location>
    <ligand>
        <name>[4Fe-4S] cluster</name>
        <dbReference type="ChEBI" id="CHEBI:49883"/>
    </ligand>
</feature>
<feature type="binding site" evidence="1">
    <location>
        <position position="71"/>
    </location>
    <ligand>
        <name>[4Fe-4S] cluster</name>
        <dbReference type="ChEBI" id="CHEBI:49883"/>
    </ligand>
</feature>
<feature type="binding site" evidence="1">
    <location>
        <position position="135"/>
    </location>
    <ligand>
        <name>[4Fe-4S] cluster</name>
        <dbReference type="ChEBI" id="CHEBI:49883"/>
    </ligand>
</feature>
<feature type="binding site" evidence="1">
    <location>
        <position position="165"/>
    </location>
    <ligand>
        <name>[4Fe-4S] cluster</name>
        <dbReference type="ChEBI" id="CHEBI:49883"/>
    </ligand>
</feature>
<gene>
    <name evidence="1" type="primary">nuoB</name>
    <name type="ordered locus">Plav_3225</name>
</gene>
<dbReference type="EC" id="7.1.1.-" evidence="1"/>
<dbReference type="EMBL" id="CP000774">
    <property type="protein sequence ID" value="ABS64831.1"/>
    <property type="molecule type" value="Genomic_DNA"/>
</dbReference>
<dbReference type="RefSeq" id="WP_012112159.1">
    <property type="nucleotide sequence ID" value="NC_009719.1"/>
</dbReference>
<dbReference type="SMR" id="A7HY48"/>
<dbReference type="STRING" id="402881.Plav_3225"/>
<dbReference type="KEGG" id="pla:Plav_3225"/>
<dbReference type="eggNOG" id="COG0377">
    <property type="taxonomic scope" value="Bacteria"/>
</dbReference>
<dbReference type="HOGENOM" id="CLU_055737_7_0_5"/>
<dbReference type="OrthoDB" id="9786737at2"/>
<dbReference type="Proteomes" id="UP000006377">
    <property type="component" value="Chromosome"/>
</dbReference>
<dbReference type="GO" id="GO:0005886">
    <property type="term" value="C:plasma membrane"/>
    <property type="evidence" value="ECO:0007669"/>
    <property type="project" value="UniProtKB-SubCell"/>
</dbReference>
<dbReference type="GO" id="GO:0045271">
    <property type="term" value="C:respiratory chain complex I"/>
    <property type="evidence" value="ECO:0007669"/>
    <property type="project" value="TreeGrafter"/>
</dbReference>
<dbReference type="GO" id="GO:0051539">
    <property type="term" value="F:4 iron, 4 sulfur cluster binding"/>
    <property type="evidence" value="ECO:0007669"/>
    <property type="project" value="UniProtKB-KW"/>
</dbReference>
<dbReference type="GO" id="GO:0005506">
    <property type="term" value="F:iron ion binding"/>
    <property type="evidence" value="ECO:0007669"/>
    <property type="project" value="UniProtKB-UniRule"/>
</dbReference>
<dbReference type="GO" id="GO:0008137">
    <property type="term" value="F:NADH dehydrogenase (ubiquinone) activity"/>
    <property type="evidence" value="ECO:0007669"/>
    <property type="project" value="InterPro"/>
</dbReference>
<dbReference type="GO" id="GO:0050136">
    <property type="term" value="F:NADH:ubiquinone reductase (non-electrogenic) activity"/>
    <property type="evidence" value="ECO:0007669"/>
    <property type="project" value="UniProtKB-UniRule"/>
</dbReference>
<dbReference type="GO" id="GO:0048038">
    <property type="term" value="F:quinone binding"/>
    <property type="evidence" value="ECO:0007669"/>
    <property type="project" value="UniProtKB-KW"/>
</dbReference>
<dbReference type="GO" id="GO:0009060">
    <property type="term" value="P:aerobic respiration"/>
    <property type="evidence" value="ECO:0007669"/>
    <property type="project" value="TreeGrafter"/>
</dbReference>
<dbReference type="GO" id="GO:0015990">
    <property type="term" value="P:electron transport coupled proton transport"/>
    <property type="evidence" value="ECO:0007669"/>
    <property type="project" value="TreeGrafter"/>
</dbReference>
<dbReference type="FunFam" id="3.40.50.12280:FF:000001">
    <property type="entry name" value="NADH-quinone oxidoreductase subunit B 2"/>
    <property type="match status" value="1"/>
</dbReference>
<dbReference type="Gene3D" id="3.40.50.12280">
    <property type="match status" value="1"/>
</dbReference>
<dbReference type="HAMAP" id="MF_01356">
    <property type="entry name" value="NDH1_NuoB"/>
    <property type="match status" value="1"/>
</dbReference>
<dbReference type="InterPro" id="IPR006137">
    <property type="entry name" value="NADH_UbQ_OxRdtase-like_20kDa"/>
</dbReference>
<dbReference type="InterPro" id="IPR006138">
    <property type="entry name" value="NADH_UQ_OxRdtase_20Kd_su"/>
</dbReference>
<dbReference type="NCBIfam" id="TIGR01957">
    <property type="entry name" value="nuoB_fam"/>
    <property type="match status" value="1"/>
</dbReference>
<dbReference type="NCBIfam" id="NF005012">
    <property type="entry name" value="PRK06411.1"/>
    <property type="match status" value="1"/>
</dbReference>
<dbReference type="PANTHER" id="PTHR11995">
    <property type="entry name" value="NADH DEHYDROGENASE"/>
    <property type="match status" value="1"/>
</dbReference>
<dbReference type="PANTHER" id="PTHR11995:SF14">
    <property type="entry name" value="NADH DEHYDROGENASE [UBIQUINONE] IRON-SULFUR PROTEIN 7, MITOCHONDRIAL"/>
    <property type="match status" value="1"/>
</dbReference>
<dbReference type="Pfam" id="PF01058">
    <property type="entry name" value="Oxidored_q6"/>
    <property type="match status" value="1"/>
</dbReference>
<dbReference type="SUPFAM" id="SSF56770">
    <property type="entry name" value="HydA/Nqo6-like"/>
    <property type="match status" value="1"/>
</dbReference>
<dbReference type="PROSITE" id="PS01150">
    <property type="entry name" value="COMPLEX1_20K"/>
    <property type="match status" value="1"/>
</dbReference>
<accession>A7HY48</accession>
<comment type="function">
    <text evidence="1">NDH-1 shuttles electrons from NADH, via FMN and iron-sulfur (Fe-S) centers, to quinones in the respiratory chain. The immediate electron acceptor for the enzyme in this species is believed to be ubiquinone. Couples the redox reaction to proton translocation (for every two electrons transferred, four hydrogen ions are translocated across the cytoplasmic membrane), and thus conserves the redox energy in a proton gradient.</text>
</comment>
<comment type="catalytic activity">
    <reaction evidence="1">
        <text>a quinone + NADH + 5 H(+)(in) = a quinol + NAD(+) + 4 H(+)(out)</text>
        <dbReference type="Rhea" id="RHEA:57888"/>
        <dbReference type="ChEBI" id="CHEBI:15378"/>
        <dbReference type="ChEBI" id="CHEBI:24646"/>
        <dbReference type="ChEBI" id="CHEBI:57540"/>
        <dbReference type="ChEBI" id="CHEBI:57945"/>
        <dbReference type="ChEBI" id="CHEBI:132124"/>
    </reaction>
</comment>
<comment type="cofactor">
    <cofactor evidence="1">
        <name>[4Fe-4S] cluster</name>
        <dbReference type="ChEBI" id="CHEBI:49883"/>
    </cofactor>
    <text evidence="1">Binds 1 [4Fe-4S] cluster.</text>
</comment>
<comment type="subunit">
    <text evidence="1">NDH-1 is composed of 14 different subunits. Subunits NuoB, C, D, E, F, and G constitute the peripheral sector of the complex.</text>
</comment>
<comment type="subcellular location">
    <subcellularLocation>
        <location evidence="1">Cell inner membrane</location>
        <topology evidence="1">Peripheral membrane protein</topology>
        <orientation evidence="1">Cytoplasmic side</orientation>
    </subcellularLocation>
</comment>
<comment type="similarity">
    <text evidence="1">Belongs to the complex I 20 kDa subunit family.</text>
</comment>
<keyword id="KW-0004">4Fe-4S</keyword>
<keyword id="KW-0997">Cell inner membrane</keyword>
<keyword id="KW-1003">Cell membrane</keyword>
<keyword id="KW-0408">Iron</keyword>
<keyword id="KW-0411">Iron-sulfur</keyword>
<keyword id="KW-0472">Membrane</keyword>
<keyword id="KW-0479">Metal-binding</keyword>
<keyword id="KW-0520">NAD</keyword>
<keyword id="KW-0874">Quinone</keyword>
<keyword id="KW-1185">Reference proteome</keyword>
<keyword id="KW-1278">Translocase</keyword>
<keyword id="KW-0813">Transport</keyword>
<keyword id="KW-0830">Ubiquinone</keyword>
<reference key="1">
    <citation type="journal article" date="2011" name="Stand. Genomic Sci.">
        <title>Complete genome sequence of Parvibaculum lavamentivorans type strain (DS-1(T)).</title>
        <authorList>
            <person name="Schleheck D."/>
            <person name="Weiss M."/>
            <person name="Pitluck S."/>
            <person name="Bruce D."/>
            <person name="Land M.L."/>
            <person name="Han S."/>
            <person name="Saunders E."/>
            <person name="Tapia R."/>
            <person name="Detter C."/>
            <person name="Brettin T."/>
            <person name="Han J."/>
            <person name="Woyke T."/>
            <person name="Goodwin L."/>
            <person name="Pennacchio L."/>
            <person name="Nolan M."/>
            <person name="Cook A.M."/>
            <person name="Kjelleberg S."/>
            <person name="Thomas T."/>
        </authorList>
    </citation>
    <scope>NUCLEOTIDE SEQUENCE [LARGE SCALE GENOMIC DNA]</scope>
    <source>
        <strain>DS-1 / DSM 13023 / NCIMB 13966</strain>
    </source>
</reference>
<organism>
    <name type="scientific">Parvibaculum lavamentivorans (strain DS-1 / DSM 13023 / NCIMB 13966)</name>
    <dbReference type="NCBI Taxonomy" id="402881"/>
    <lineage>
        <taxon>Bacteria</taxon>
        <taxon>Pseudomonadati</taxon>
        <taxon>Pseudomonadota</taxon>
        <taxon>Alphaproteobacteria</taxon>
        <taxon>Hyphomicrobiales</taxon>
        <taxon>Parvibaculaceae</taxon>
        <taxon>Parvibaculum</taxon>
    </lineage>
</organism>
<evidence type="ECO:0000255" key="1">
    <source>
        <dbReference type="HAMAP-Rule" id="MF_01356"/>
    </source>
</evidence>
<sequence length="191" mass="20985">MGVTNPDKVISNTPGVVDPATSVPAWQDDAFFRQATDQLADKGFVLTTVDDLINWSRTGSLMWMTFGLACCAVEMMQTSMPRYDAERFGVAPRASPRQSDVMIVAGTLTNKMAPALRKVYDQMPEPRYVISMGSCANGGGYYHYSYSVVRGCDRIVPVDIYVPGCPPTAEALLYGILALQKKIRRTGTLDR</sequence>
<name>NUOB_PARL1</name>
<proteinExistence type="inferred from homology"/>